<sequence>MYTNYSLTSSDAMPRTYLVGTASPEMSKKKRQSANCDKPTRRVIHIIDTNEHSEVDLKNELPITCTNEDGEMTSSSWTSQTANDFLKLAYVNAKLDPSLPSQYFKQDIINVLQSLEIPGWSVPGSKESSLNKNLLTLTQIKGALTNVIYKIHYPNLPPLLMRIFGDSIDSVIDREYELKVIARLSFYDLGPKLEGFFENGRFEKYIEGSRTSTQADFIDRDTSIKIAKKLKELHCTVPLTHKEITDQPSCWTTFDQWIKLIDSHKEWVSNNVNISENLRCSSWNFFLKSFKNYKRWLYNDSAFTSKLLREDDKDSMINSGLKMVFCHNDLQHGNLLFKSKGKDDISVGDLTIIDFEYAGPNPVVFDLSNHLNEWMQDYNDVQSFKSHIDKYPKEEDILVFAQSYINHMNENHVKIASQEVRILYNLIIEWRPCTQLFWCLWALLQSGRLPQRPLIEGEKLMSEKAGLGDETHLMEHKNKENGKYDCSEDDSFNYLGFCKEKMSVFWGDLITLGVIDKDCPDIGKTDYLDTKLIF</sequence>
<dbReference type="EC" id="2.7.1.82" evidence="1"/>
<dbReference type="EMBL" id="Z50046">
    <property type="protein sequence ID" value="CAA90370.1"/>
    <property type="molecule type" value="Genomic_DNA"/>
</dbReference>
<dbReference type="EMBL" id="BK006938">
    <property type="protein sequence ID" value="DAA11990.1"/>
    <property type="molecule type" value="Genomic_DNA"/>
</dbReference>
<dbReference type="PIR" id="S57974">
    <property type="entry name" value="S57974"/>
</dbReference>
<dbReference type="RefSeq" id="NP_010431.3">
    <property type="nucleotide sequence ID" value="NM_001180454.3"/>
</dbReference>
<dbReference type="SMR" id="Q03764"/>
<dbReference type="BioGRID" id="32201">
    <property type="interactions" value="114"/>
</dbReference>
<dbReference type="FunCoup" id="Q03764">
    <property type="interactions" value="385"/>
</dbReference>
<dbReference type="IntAct" id="Q03764">
    <property type="interactions" value="2"/>
</dbReference>
<dbReference type="MINT" id="Q03764"/>
<dbReference type="STRING" id="4932.YDR147W"/>
<dbReference type="SwissLipids" id="SLP:000000065"/>
<dbReference type="iPTMnet" id="Q03764"/>
<dbReference type="PaxDb" id="4932-YDR147W"/>
<dbReference type="PeptideAtlas" id="Q03764"/>
<dbReference type="EnsemblFungi" id="YDR147W_mRNA">
    <property type="protein sequence ID" value="YDR147W"/>
    <property type="gene ID" value="YDR147W"/>
</dbReference>
<dbReference type="GeneID" id="851725"/>
<dbReference type="KEGG" id="sce:YDR147W"/>
<dbReference type="AGR" id="SGD:S000002554"/>
<dbReference type="SGD" id="S000002554">
    <property type="gene designation" value="EKI1"/>
</dbReference>
<dbReference type="VEuPathDB" id="FungiDB:YDR147W"/>
<dbReference type="eggNOG" id="KOG2686">
    <property type="taxonomic scope" value="Eukaryota"/>
</dbReference>
<dbReference type="GeneTree" id="ENSGT00950000182939"/>
<dbReference type="HOGENOM" id="CLU_012712_4_2_1"/>
<dbReference type="InParanoid" id="Q03764"/>
<dbReference type="OrthoDB" id="10267235at2759"/>
<dbReference type="BioCyc" id="YEAST:YDR147W-MONOMER"/>
<dbReference type="Reactome" id="R-SCE-1483191">
    <property type="pathway name" value="Synthesis of PC"/>
</dbReference>
<dbReference type="Reactome" id="R-SCE-1483213">
    <property type="pathway name" value="Synthesis of PE"/>
</dbReference>
<dbReference type="UniPathway" id="UPA00558">
    <property type="reaction ID" value="UER00741"/>
</dbReference>
<dbReference type="BioGRID-ORCS" id="851725">
    <property type="hits" value="0 hits in 10 CRISPR screens"/>
</dbReference>
<dbReference type="PRO" id="PR:Q03764"/>
<dbReference type="Proteomes" id="UP000002311">
    <property type="component" value="Chromosome IV"/>
</dbReference>
<dbReference type="RNAct" id="Q03764">
    <property type="molecule type" value="protein"/>
</dbReference>
<dbReference type="GO" id="GO:0005737">
    <property type="term" value="C:cytoplasm"/>
    <property type="evidence" value="ECO:0007005"/>
    <property type="project" value="SGD"/>
</dbReference>
<dbReference type="GO" id="GO:0005524">
    <property type="term" value="F:ATP binding"/>
    <property type="evidence" value="ECO:0007669"/>
    <property type="project" value="UniProtKB-KW"/>
</dbReference>
<dbReference type="GO" id="GO:0004103">
    <property type="term" value="F:choline kinase activity"/>
    <property type="evidence" value="ECO:0000314"/>
    <property type="project" value="SGD"/>
</dbReference>
<dbReference type="GO" id="GO:0004305">
    <property type="term" value="F:ethanolamine kinase activity"/>
    <property type="evidence" value="ECO:0000314"/>
    <property type="project" value="SGD"/>
</dbReference>
<dbReference type="GO" id="GO:0006656">
    <property type="term" value="P:phosphatidylcholine biosynthetic process"/>
    <property type="evidence" value="ECO:0000315"/>
    <property type="project" value="SGD"/>
</dbReference>
<dbReference type="GO" id="GO:0006646">
    <property type="term" value="P:phosphatidylethanolamine biosynthetic process"/>
    <property type="evidence" value="ECO:0000315"/>
    <property type="project" value="SGD"/>
</dbReference>
<dbReference type="CDD" id="cd05157">
    <property type="entry name" value="ETNK_euk"/>
    <property type="match status" value="1"/>
</dbReference>
<dbReference type="Gene3D" id="3.90.1200.10">
    <property type="match status" value="1"/>
</dbReference>
<dbReference type="Gene3D" id="3.30.200.20">
    <property type="entry name" value="Phosphorylase Kinase, domain 1"/>
    <property type="match status" value="1"/>
</dbReference>
<dbReference type="InterPro" id="IPR007521">
    <property type="entry name" value="Choline_kin_N"/>
</dbReference>
<dbReference type="InterPro" id="IPR011009">
    <property type="entry name" value="Kinase-like_dom_sf"/>
</dbReference>
<dbReference type="PANTHER" id="PTHR22603">
    <property type="entry name" value="CHOLINE/ETHANOALAMINE KINASE"/>
    <property type="match status" value="1"/>
</dbReference>
<dbReference type="PANTHER" id="PTHR22603:SF93">
    <property type="entry name" value="RE24176P"/>
    <property type="match status" value="1"/>
</dbReference>
<dbReference type="Pfam" id="PF04428">
    <property type="entry name" value="Choline_kin_N"/>
    <property type="match status" value="1"/>
</dbReference>
<dbReference type="Pfam" id="PF01633">
    <property type="entry name" value="Choline_kinase"/>
    <property type="match status" value="1"/>
</dbReference>
<dbReference type="SUPFAM" id="SSF56112">
    <property type="entry name" value="Protein kinase-like (PK-like)"/>
    <property type="match status" value="1"/>
</dbReference>
<gene>
    <name type="primary">EKI1</name>
    <name type="ordered locus">YDR147W</name>
    <name type="ORF">YD8358.04</name>
</gene>
<accession>Q03764</accession>
<accession>D6VSD0</accession>
<reference key="1">
    <citation type="journal article" date="1997" name="Nature">
        <title>The nucleotide sequence of Saccharomyces cerevisiae chromosome IV.</title>
        <authorList>
            <person name="Jacq C."/>
            <person name="Alt-Moerbe J."/>
            <person name="Andre B."/>
            <person name="Arnold W."/>
            <person name="Bahr A."/>
            <person name="Ballesta J.P.G."/>
            <person name="Bargues M."/>
            <person name="Baron L."/>
            <person name="Becker A."/>
            <person name="Biteau N."/>
            <person name="Bloecker H."/>
            <person name="Blugeon C."/>
            <person name="Boskovic J."/>
            <person name="Brandt P."/>
            <person name="Brueckner M."/>
            <person name="Buitrago M.J."/>
            <person name="Coster F."/>
            <person name="Delaveau T."/>
            <person name="del Rey F."/>
            <person name="Dujon B."/>
            <person name="Eide L.G."/>
            <person name="Garcia-Cantalejo J.M."/>
            <person name="Goffeau A."/>
            <person name="Gomez-Peris A."/>
            <person name="Granotier C."/>
            <person name="Hanemann V."/>
            <person name="Hankeln T."/>
            <person name="Hoheisel J.D."/>
            <person name="Jaeger W."/>
            <person name="Jimenez A."/>
            <person name="Jonniaux J.-L."/>
            <person name="Kraemer C."/>
            <person name="Kuester H."/>
            <person name="Laamanen P."/>
            <person name="Legros Y."/>
            <person name="Louis E.J."/>
            <person name="Moeller-Rieker S."/>
            <person name="Monnet A."/>
            <person name="Moro M."/>
            <person name="Mueller-Auer S."/>
            <person name="Nussbaumer B."/>
            <person name="Paricio N."/>
            <person name="Paulin L."/>
            <person name="Perea J."/>
            <person name="Perez-Alonso M."/>
            <person name="Perez-Ortin J.E."/>
            <person name="Pohl T.M."/>
            <person name="Prydz H."/>
            <person name="Purnelle B."/>
            <person name="Rasmussen S.W."/>
            <person name="Remacha M.A."/>
            <person name="Revuelta J.L."/>
            <person name="Rieger M."/>
            <person name="Salom D."/>
            <person name="Saluz H.P."/>
            <person name="Saiz J.E."/>
            <person name="Saren A.-M."/>
            <person name="Schaefer M."/>
            <person name="Scharfe M."/>
            <person name="Schmidt E.R."/>
            <person name="Schneider C."/>
            <person name="Scholler P."/>
            <person name="Schwarz S."/>
            <person name="Soler-Mira A."/>
            <person name="Urrestarazu L.A."/>
            <person name="Verhasselt P."/>
            <person name="Vissers S."/>
            <person name="Voet M."/>
            <person name="Volckaert G."/>
            <person name="Wagner G."/>
            <person name="Wambutt R."/>
            <person name="Wedler E."/>
            <person name="Wedler H."/>
            <person name="Woelfl S."/>
            <person name="Harris D.E."/>
            <person name="Bowman S."/>
            <person name="Brown D."/>
            <person name="Churcher C.M."/>
            <person name="Connor R."/>
            <person name="Dedman K."/>
            <person name="Gentles S."/>
            <person name="Hamlin N."/>
            <person name="Hunt S."/>
            <person name="Jones L."/>
            <person name="McDonald S."/>
            <person name="Murphy L.D."/>
            <person name="Niblett D."/>
            <person name="Odell C."/>
            <person name="Oliver K."/>
            <person name="Rajandream M.A."/>
            <person name="Richards C."/>
            <person name="Shore L."/>
            <person name="Walsh S.V."/>
            <person name="Barrell B.G."/>
            <person name="Dietrich F.S."/>
            <person name="Mulligan J.T."/>
            <person name="Allen E."/>
            <person name="Araujo R."/>
            <person name="Aviles E."/>
            <person name="Berno A."/>
            <person name="Carpenter J."/>
            <person name="Chen E."/>
            <person name="Cherry J.M."/>
            <person name="Chung E."/>
            <person name="Duncan M."/>
            <person name="Hunicke-Smith S."/>
            <person name="Hyman R.W."/>
            <person name="Komp C."/>
            <person name="Lashkari D."/>
            <person name="Lew H."/>
            <person name="Lin D."/>
            <person name="Mosedale D."/>
            <person name="Nakahara K."/>
            <person name="Namath A."/>
            <person name="Oefner P."/>
            <person name="Oh C."/>
            <person name="Petel F.X."/>
            <person name="Roberts D."/>
            <person name="Schramm S."/>
            <person name="Schroeder M."/>
            <person name="Shogren T."/>
            <person name="Shroff N."/>
            <person name="Winant A."/>
            <person name="Yelton M.A."/>
            <person name="Botstein D."/>
            <person name="Davis R.W."/>
            <person name="Johnston M."/>
            <person name="Andrews S."/>
            <person name="Brinkman R."/>
            <person name="Cooper J."/>
            <person name="Ding H."/>
            <person name="Du Z."/>
            <person name="Favello A."/>
            <person name="Fulton L."/>
            <person name="Gattung S."/>
            <person name="Greco T."/>
            <person name="Hallsworth K."/>
            <person name="Hawkins J."/>
            <person name="Hillier L.W."/>
            <person name="Jier M."/>
            <person name="Johnson D."/>
            <person name="Johnston L."/>
            <person name="Kirsten J."/>
            <person name="Kucaba T."/>
            <person name="Langston Y."/>
            <person name="Latreille P."/>
            <person name="Le T."/>
            <person name="Mardis E."/>
            <person name="Menezes S."/>
            <person name="Miller N."/>
            <person name="Nhan M."/>
            <person name="Pauley A."/>
            <person name="Peluso D."/>
            <person name="Rifkin L."/>
            <person name="Riles L."/>
            <person name="Taich A."/>
            <person name="Trevaskis E."/>
            <person name="Vignati D."/>
            <person name="Wilcox L."/>
            <person name="Wohldman P."/>
            <person name="Vaudin M."/>
            <person name="Wilson R."/>
            <person name="Waterston R."/>
            <person name="Albermann K."/>
            <person name="Hani J."/>
            <person name="Heumann K."/>
            <person name="Kleine K."/>
            <person name="Mewes H.-W."/>
            <person name="Zollner A."/>
            <person name="Zaccaria P."/>
        </authorList>
    </citation>
    <scope>NUCLEOTIDE SEQUENCE [LARGE SCALE GENOMIC DNA]</scope>
    <source>
        <strain>ATCC 204508 / S288c</strain>
    </source>
</reference>
<reference key="2">
    <citation type="journal article" date="2014" name="G3 (Bethesda)">
        <title>The reference genome sequence of Saccharomyces cerevisiae: Then and now.</title>
        <authorList>
            <person name="Engel S.R."/>
            <person name="Dietrich F.S."/>
            <person name="Fisk D.G."/>
            <person name="Binkley G."/>
            <person name="Balakrishnan R."/>
            <person name="Costanzo M.C."/>
            <person name="Dwight S.S."/>
            <person name="Hitz B.C."/>
            <person name="Karra K."/>
            <person name="Nash R.S."/>
            <person name="Weng S."/>
            <person name="Wong E.D."/>
            <person name="Lloyd P."/>
            <person name="Skrzypek M.S."/>
            <person name="Miyasato S.R."/>
            <person name="Simison M."/>
            <person name="Cherry J.M."/>
        </authorList>
    </citation>
    <scope>GENOME REANNOTATION</scope>
    <source>
        <strain>ATCC 204508 / S288c</strain>
    </source>
</reference>
<reference key="3">
    <citation type="journal article" date="1999" name="J. Biol. Chem.">
        <title>Isolation and characterization of the Saccharomyces cerevisiae EKI1 gene encoding ethanolamine kinase.</title>
        <authorList>
            <person name="Kim K."/>
            <person name="Kim K.-H."/>
            <person name="Storey M.K."/>
            <person name="Voelker D.R."/>
            <person name="Carman G.M."/>
        </authorList>
    </citation>
    <scope>FUNCTION</scope>
    <scope>CATALYTIC ACTIVITY</scope>
    <scope>BIOPHYSICOCHEMICAL PROPERTIES</scope>
</reference>
<reference key="4">
    <citation type="journal article" date="2003" name="Nature">
        <title>Global analysis of protein localization in budding yeast.</title>
        <authorList>
            <person name="Huh W.-K."/>
            <person name="Falvo J.V."/>
            <person name="Gerke L.C."/>
            <person name="Carroll A.S."/>
            <person name="Howson R.W."/>
            <person name="Weissman J.S."/>
            <person name="O'Shea E.K."/>
        </authorList>
    </citation>
    <scope>SUBCELLULAR LOCATION [LARGE SCALE ANALYSIS]</scope>
</reference>
<reference key="5">
    <citation type="journal article" date="2003" name="Nature">
        <title>Global analysis of protein expression in yeast.</title>
        <authorList>
            <person name="Ghaemmaghami S."/>
            <person name="Huh W.-K."/>
            <person name="Bower K."/>
            <person name="Howson R.W."/>
            <person name="Belle A."/>
            <person name="Dephoure N."/>
            <person name="O'Shea E.K."/>
            <person name="Weissman J.S."/>
        </authorList>
    </citation>
    <scope>LEVEL OF PROTEIN EXPRESSION [LARGE SCALE ANALYSIS]</scope>
</reference>
<reference key="6">
    <citation type="journal article" date="2004" name="J. Biol. Chem.">
        <title>Regulation of the yeast EKI1-encoded ethanolamine kinase by inositol and choline.</title>
        <authorList>
            <person name="Kersting M.C."/>
            <person name="Choi H.S."/>
            <person name="Carman G.M."/>
        </authorList>
    </citation>
    <scope>INDUCTION</scope>
</reference>
<reference key="7">
    <citation type="journal article" date="2006" name="J. Biol. Chem.">
        <title>Regulation of the Saccharomyces cerevisiae EKI1-encoded ethanolamine kinase by zinc depletion.</title>
        <authorList>
            <person name="Kersting M.C."/>
            <person name="Carman G.M."/>
        </authorList>
    </citation>
    <scope>INDUCTION</scope>
</reference>
<reference key="8">
    <citation type="journal article" date="2008" name="Mol. Cell. Proteomics">
        <title>A multidimensional chromatography technology for in-depth phosphoproteome analysis.</title>
        <authorList>
            <person name="Albuquerque C.P."/>
            <person name="Smolka M.B."/>
            <person name="Payne S.H."/>
            <person name="Bafna V."/>
            <person name="Eng J."/>
            <person name="Zhou H."/>
        </authorList>
    </citation>
    <scope>PHOSPHORYLATION [LARGE SCALE ANALYSIS] AT SER-23</scope>
    <scope>IDENTIFICATION BY MASS SPECTROMETRY [LARGE SCALE ANALYSIS]</scope>
</reference>
<name>EKI1_YEAST</name>
<organism>
    <name type="scientific">Saccharomyces cerevisiae (strain ATCC 204508 / S288c)</name>
    <name type="common">Baker's yeast</name>
    <dbReference type="NCBI Taxonomy" id="559292"/>
    <lineage>
        <taxon>Eukaryota</taxon>
        <taxon>Fungi</taxon>
        <taxon>Dikarya</taxon>
        <taxon>Ascomycota</taxon>
        <taxon>Saccharomycotina</taxon>
        <taxon>Saccharomycetes</taxon>
        <taxon>Saccharomycetales</taxon>
        <taxon>Saccharomycetaceae</taxon>
        <taxon>Saccharomyces</taxon>
    </lineage>
</organism>
<keyword id="KW-0067">ATP-binding</keyword>
<keyword id="KW-0963">Cytoplasm</keyword>
<keyword id="KW-0418">Kinase</keyword>
<keyword id="KW-0444">Lipid biosynthesis</keyword>
<keyword id="KW-0443">Lipid metabolism</keyword>
<keyword id="KW-0547">Nucleotide-binding</keyword>
<keyword id="KW-0594">Phospholipid biosynthesis</keyword>
<keyword id="KW-1208">Phospholipid metabolism</keyword>
<keyword id="KW-0597">Phosphoprotein</keyword>
<keyword id="KW-1185">Reference proteome</keyword>
<keyword id="KW-0808">Transferase</keyword>
<protein>
    <recommendedName>
        <fullName evidence="6">Ethanolamine kinase</fullName>
        <shortName>EK</shortName>
        <ecNumber evidence="1">2.7.1.82</ecNumber>
    </recommendedName>
</protein>
<feature type="chain" id="PRO_0000206230" description="Ethanolamine kinase">
    <location>
        <begin position="1"/>
        <end position="534"/>
    </location>
</feature>
<feature type="modified residue" description="Phosphoserine" evidence="8">
    <location>
        <position position="23"/>
    </location>
</feature>
<comment type="function">
    <text evidence="1">Catalyzes the committed step of phosphatidylethanolamine synthesis via the CDP-ethanolamine branch of the Kennedy pathway. Also exhibits choline kinase activity, thus contributing to phosphatidylcholine synthesis via the CDP-choline pathway, but its preferred substrate is ethanolamine.</text>
</comment>
<comment type="catalytic activity">
    <reaction evidence="1">
        <text>ethanolamine + ATP = phosphoethanolamine + ADP + H(+)</text>
        <dbReference type="Rhea" id="RHEA:13069"/>
        <dbReference type="ChEBI" id="CHEBI:15378"/>
        <dbReference type="ChEBI" id="CHEBI:30616"/>
        <dbReference type="ChEBI" id="CHEBI:57603"/>
        <dbReference type="ChEBI" id="CHEBI:58190"/>
        <dbReference type="ChEBI" id="CHEBI:456216"/>
        <dbReference type="EC" id="2.7.1.82"/>
    </reaction>
    <physiologicalReaction direction="left-to-right" evidence="7">
        <dbReference type="Rhea" id="RHEA:13070"/>
    </physiologicalReaction>
</comment>
<comment type="catalytic activity">
    <reaction evidence="1">
        <text>choline + ATP = phosphocholine + ADP + H(+)</text>
        <dbReference type="Rhea" id="RHEA:12837"/>
        <dbReference type="ChEBI" id="CHEBI:15354"/>
        <dbReference type="ChEBI" id="CHEBI:15378"/>
        <dbReference type="ChEBI" id="CHEBI:30616"/>
        <dbReference type="ChEBI" id="CHEBI:295975"/>
        <dbReference type="ChEBI" id="CHEBI:456216"/>
    </reaction>
    <physiologicalReaction direction="left-to-right" evidence="7">
        <dbReference type="Rhea" id="RHEA:12838"/>
    </physiologicalReaction>
</comment>
<comment type="biophysicochemical properties">
    <kinetics>
        <KM evidence="1">0.171 mM for ethanolamine</KM>
        <KM evidence="1">0.275 mM for choline</KM>
        <Vmax evidence="1">346.0 nmol/min/mg enzyme for ethanolamine</Vmax>
        <Vmax evidence="1">249.0 nmol/min/mg enzyme for choline</Vmax>
    </kinetics>
</comment>
<comment type="pathway">
    <text>Phospholipid metabolism; phosphatidylethanolamine biosynthesis; phosphatidylethanolamine from ethanolamine: step 1/3.</text>
</comment>
<comment type="subcellular location">
    <subcellularLocation>
        <location evidence="2">Cytoplasm</location>
    </subcellularLocation>
</comment>
<comment type="induction">
    <text evidence="4 5">Induced by zinc-depletion via the transcription factor ZAP1. Expression is sensitive to intracellular zinc levels (PubMed:16551612). Repressed by inositol (PubMed:15201274).</text>
</comment>
<comment type="miscellaneous">
    <text evidence="3">Present with 3420 molecules/cell in log phase SD medium.</text>
</comment>
<comment type="similarity">
    <text evidence="6">Belongs to the choline/ethanolamine kinase family.</text>
</comment>
<evidence type="ECO:0000269" key="1">
    <source>
    </source>
</evidence>
<evidence type="ECO:0000269" key="2">
    <source>
    </source>
</evidence>
<evidence type="ECO:0000269" key="3">
    <source>
    </source>
</evidence>
<evidence type="ECO:0000269" key="4">
    <source>
    </source>
</evidence>
<evidence type="ECO:0000269" key="5">
    <source>
    </source>
</evidence>
<evidence type="ECO:0000305" key="6"/>
<evidence type="ECO:0000305" key="7">
    <source>
    </source>
</evidence>
<evidence type="ECO:0007744" key="8">
    <source>
    </source>
</evidence>
<proteinExistence type="evidence at protein level"/>